<reference key="1">
    <citation type="submission" date="2007-10" db="EMBL/GenBank/DDBJ databases">
        <title>Complete genome of Alkaliphilus oremlandii OhILAs.</title>
        <authorList>
            <person name="Copeland A."/>
            <person name="Lucas S."/>
            <person name="Lapidus A."/>
            <person name="Barry K."/>
            <person name="Detter J.C."/>
            <person name="Glavina del Rio T."/>
            <person name="Hammon N."/>
            <person name="Israni S."/>
            <person name="Dalin E."/>
            <person name="Tice H."/>
            <person name="Pitluck S."/>
            <person name="Chain P."/>
            <person name="Malfatti S."/>
            <person name="Shin M."/>
            <person name="Vergez L."/>
            <person name="Schmutz J."/>
            <person name="Larimer F."/>
            <person name="Land M."/>
            <person name="Hauser L."/>
            <person name="Kyrpides N."/>
            <person name="Mikhailova N."/>
            <person name="Stolz J.F."/>
            <person name="Dawson A."/>
            <person name="Fisher E."/>
            <person name="Crable B."/>
            <person name="Perera E."/>
            <person name="Lisak J."/>
            <person name="Ranganathan M."/>
            <person name="Basu P."/>
            <person name="Richardson P."/>
        </authorList>
    </citation>
    <scope>NUCLEOTIDE SEQUENCE [LARGE SCALE GENOMIC DNA]</scope>
    <source>
        <strain>OhILAs</strain>
    </source>
</reference>
<organism>
    <name type="scientific">Alkaliphilus oremlandii (strain OhILAs)</name>
    <name type="common">Clostridium oremlandii (strain OhILAs)</name>
    <dbReference type="NCBI Taxonomy" id="350688"/>
    <lineage>
        <taxon>Bacteria</taxon>
        <taxon>Bacillati</taxon>
        <taxon>Bacillota</taxon>
        <taxon>Clostridia</taxon>
        <taxon>Peptostreptococcales</taxon>
        <taxon>Natronincolaceae</taxon>
        <taxon>Alkaliphilus</taxon>
    </lineage>
</organism>
<gene>
    <name evidence="1" type="primary">ispH</name>
    <name type="ordered locus">Clos_1562</name>
</gene>
<comment type="function">
    <text evidence="1">Catalyzes the conversion of 1-hydroxy-2-methyl-2-(E)-butenyl 4-diphosphate (HMBPP) into a mixture of isopentenyl diphosphate (IPP) and dimethylallyl diphosphate (DMAPP). Acts in the terminal step of the DOXP/MEP pathway for isoprenoid precursor biosynthesis.</text>
</comment>
<comment type="catalytic activity">
    <reaction evidence="1">
        <text>isopentenyl diphosphate + 2 oxidized [2Fe-2S]-[ferredoxin] + H2O = (2E)-4-hydroxy-3-methylbut-2-enyl diphosphate + 2 reduced [2Fe-2S]-[ferredoxin] + 2 H(+)</text>
        <dbReference type="Rhea" id="RHEA:24488"/>
        <dbReference type="Rhea" id="RHEA-COMP:10000"/>
        <dbReference type="Rhea" id="RHEA-COMP:10001"/>
        <dbReference type="ChEBI" id="CHEBI:15377"/>
        <dbReference type="ChEBI" id="CHEBI:15378"/>
        <dbReference type="ChEBI" id="CHEBI:33737"/>
        <dbReference type="ChEBI" id="CHEBI:33738"/>
        <dbReference type="ChEBI" id="CHEBI:128753"/>
        <dbReference type="ChEBI" id="CHEBI:128769"/>
        <dbReference type="EC" id="1.17.7.4"/>
    </reaction>
</comment>
<comment type="catalytic activity">
    <reaction evidence="1">
        <text>dimethylallyl diphosphate + 2 oxidized [2Fe-2S]-[ferredoxin] + H2O = (2E)-4-hydroxy-3-methylbut-2-enyl diphosphate + 2 reduced [2Fe-2S]-[ferredoxin] + 2 H(+)</text>
        <dbReference type="Rhea" id="RHEA:24825"/>
        <dbReference type="Rhea" id="RHEA-COMP:10000"/>
        <dbReference type="Rhea" id="RHEA-COMP:10001"/>
        <dbReference type="ChEBI" id="CHEBI:15377"/>
        <dbReference type="ChEBI" id="CHEBI:15378"/>
        <dbReference type="ChEBI" id="CHEBI:33737"/>
        <dbReference type="ChEBI" id="CHEBI:33738"/>
        <dbReference type="ChEBI" id="CHEBI:57623"/>
        <dbReference type="ChEBI" id="CHEBI:128753"/>
        <dbReference type="EC" id="1.17.7.4"/>
    </reaction>
</comment>
<comment type="cofactor">
    <cofactor evidence="1">
        <name>[4Fe-4S] cluster</name>
        <dbReference type="ChEBI" id="CHEBI:49883"/>
    </cofactor>
    <text evidence="1">Binds 1 [4Fe-4S] cluster per subunit.</text>
</comment>
<comment type="pathway">
    <text evidence="1">Isoprenoid biosynthesis; dimethylallyl diphosphate biosynthesis; dimethylallyl diphosphate from (2E)-4-hydroxy-3-methylbutenyl diphosphate: step 1/1.</text>
</comment>
<comment type="pathway">
    <text evidence="1">Isoprenoid biosynthesis; isopentenyl diphosphate biosynthesis via DXP pathway; isopentenyl diphosphate from 1-deoxy-D-xylulose 5-phosphate: step 6/6.</text>
</comment>
<comment type="similarity">
    <text evidence="1">Belongs to the IspH family.</text>
</comment>
<feature type="chain" id="PRO_1000058502" description="4-hydroxy-3-methylbut-2-enyl diphosphate reductase">
    <location>
        <begin position="1"/>
        <end position="279"/>
    </location>
</feature>
<feature type="active site" description="Proton donor" evidence="1">
    <location>
        <position position="126"/>
    </location>
</feature>
<feature type="binding site" evidence="1">
    <location>
        <position position="12"/>
    </location>
    <ligand>
        <name>[4Fe-4S] cluster</name>
        <dbReference type="ChEBI" id="CHEBI:49883"/>
    </ligand>
</feature>
<feature type="binding site" evidence="1">
    <location>
        <position position="42"/>
    </location>
    <ligand>
        <name>(2E)-4-hydroxy-3-methylbut-2-enyl diphosphate</name>
        <dbReference type="ChEBI" id="CHEBI:128753"/>
    </ligand>
</feature>
<feature type="binding site" evidence="1">
    <location>
        <position position="42"/>
    </location>
    <ligand>
        <name>dimethylallyl diphosphate</name>
        <dbReference type="ChEBI" id="CHEBI:57623"/>
    </ligand>
</feature>
<feature type="binding site" evidence="1">
    <location>
        <position position="42"/>
    </location>
    <ligand>
        <name>isopentenyl diphosphate</name>
        <dbReference type="ChEBI" id="CHEBI:128769"/>
    </ligand>
</feature>
<feature type="binding site" evidence="1">
    <location>
        <position position="74"/>
    </location>
    <ligand>
        <name>(2E)-4-hydroxy-3-methylbut-2-enyl diphosphate</name>
        <dbReference type="ChEBI" id="CHEBI:128753"/>
    </ligand>
</feature>
<feature type="binding site" evidence="1">
    <location>
        <position position="74"/>
    </location>
    <ligand>
        <name>dimethylallyl diphosphate</name>
        <dbReference type="ChEBI" id="CHEBI:57623"/>
    </ligand>
</feature>
<feature type="binding site" evidence="1">
    <location>
        <position position="74"/>
    </location>
    <ligand>
        <name>isopentenyl diphosphate</name>
        <dbReference type="ChEBI" id="CHEBI:128769"/>
    </ligand>
</feature>
<feature type="binding site" evidence="1">
    <location>
        <position position="96"/>
    </location>
    <ligand>
        <name>[4Fe-4S] cluster</name>
        <dbReference type="ChEBI" id="CHEBI:49883"/>
    </ligand>
</feature>
<feature type="binding site" evidence="1">
    <location>
        <position position="124"/>
    </location>
    <ligand>
        <name>(2E)-4-hydroxy-3-methylbut-2-enyl diphosphate</name>
        <dbReference type="ChEBI" id="CHEBI:128753"/>
    </ligand>
</feature>
<feature type="binding site" evidence="1">
    <location>
        <position position="124"/>
    </location>
    <ligand>
        <name>dimethylallyl diphosphate</name>
        <dbReference type="ChEBI" id="CHEBI:57623"/>
    </ligand>
</feature>
<feature type="binding site" evidence="1">
    <location>
        <position position="124"/>
    </location>
    <ligand>
        <name>isopentenyl diphosphate</name>
        <dbReference type="ChEBI" id="CHEBI:128769"/>
    </ligand>
</feature>
<feature type="binding site" evidence="1">
    <location>
        <position position="162"/>
    </location>
    <ligand>
        <name>(2E)-4-hydroxy-3-methylbut-2-enyl diphosphate</name>
        <dbReference type="ChEBI" id="CHEBI:128753"/>
    </ligand>
</feature>
<feature type="binding site" evidence="1">
    <location>
        <position position="190"/>
    </location>
    <ligand>
        <name>[4Fe-4S] cluster</name>
        <dbReference type="ChEBI" id="CHEBI:49883"/>
    </ligand>
</feature>
<feature type="binding site" evidence="1">
    <location>
        <position position="218"/>
    </location>
    <ligand>
        <name>(2E)-4-hydroxy-3-methylbut-2-enyl diphosphate</name>
        <dbReference type="ChEBI" id="CHEBI:128753"/>
    </ligand>
</feature>
<feature type="binding site" evidence="1">
    <location>
        <position position="218"/>
    </location>
    <ligand>
        <name>dimethylallyl diphosphate</name>
        <dbReference type="ChEBI" id="CHEBI:57623"/>
    </ligand>
</feature>
<feature type="binding site" evidence="1">
    <location>
        <position position="218"/>
    </location>
    <ligand>
        <name>isopentenyl diphosphate</name>
        <dbReference type="ChEBI" id="CHEBI:128769"/>
    </ligand>
</feature>
<feature type="binding site" evidence="1">
    <location>
        <position position="219"/>
    </location>
    <ligand>
        <name>(2E)-4-hydroxy-3-methylbut-2-enyl diphosphate</name>
        <dbReference type="ChEBI" id="CHEBI:128753"/>
    </ligand>
</feature>
<feature type="binding site" evidence="1">
    <location>
        <position position="219"/>
    </location>
    <ligand>
        <name>dimethylallyl diphosphate</name>
        <dbReference type="ChEBI" id="CHEBI:57623"/>
    </ligand>
</feature>
<feature type="binding site" evidence="1">
    <location>
        <position position="219"/>
    </location>
    <ligand>
        <name>isopentenyl diphosphate</name>
        <dbReference type="ChEBI" id="CHEBI:128769"/>
    </ligand>
</feature>
<feature type="binding site" evidence="1">
    <location>
        <position position="220"/>
    </location>
    <ligand>
        <name>(2E)-4-hydroxy-3-methylbut-2-enyl diphosphate</name>
        <dbReference type="ChEBI" id="CHEBI:128753"/>
    </ligand>
</feature>
<feature type="binding site" evidence="1">
    <location>
        <position position="220"/>
    </location>
    <ligand>
        <name>dimethylallyl diphosphate</name>
        <dbReference type="ChEBI" id="CHEBI:57623"/>
    </ligand>
</feature>
<feature type="binding site" evidence="1">
    <location>
        <position position="220"/>
    </location>
    <ligand>
        <name>isopentenyl diphosphate</name>
        <dbReference type="ChEBI" id="CHEBI:128769"/>
    </ligand>
</feature>
<feature type="binding site" evidence="1">
    <location>
        <position position="263"/>
    </location>
    <ligand>
        <name>(2E)-4-hydroxy-3-methylbut-2-enyl diphosphate</name>
        <dbReference type="ChEBI" id="CHEBI:128753"/>
    </ligand>
</feature>
<feature type="binding site" evidence="1">
    <location>
        <position position="263"/>
    </location>
    <ligand>
        <name>dimethylallyl diphosphate</name>
        <dbReference type="ChEBI" id="CHEBI:57623"/>
    </ligand>
</feature>
<feature type="binding site" evidence="1">
    <location>
        <position position="263"/>
    </location>
    <ligand>
        <name>isopentenyl diphosphate</name>
        <dbReference type="ChEBI" id="CHEBI:128769"/>
    </ligand>
</feature>
<name>ISPH_ALKOO</name>
<keyword id="KW-0004">4Fe-4S</keyword>
<keyword id="KW-0408">Iron</keyword>
<keyword id="KW-0411">Iron-sulfur</keyword>
<keyword id="KW-0414">Isoprene biosynthesis</keyword>
<keyword id="KW-0479">Metal-binding</keyword>
<keyword id="KW-0560">Oxidoreductase</keyword>
<keyword id="KW-1185">Reference proteome</keyword>
<sequence length="279" mass="31107">MKVVVADHSGFCFGVEKAIDTAFKELEYKDSKDIYTLGPLIHNQQVISHLEENGIKVVSDLNSGKDGVVIIRSHGVPKDVYKDASEKKIDLVDATCPFVRKIQNIVEEYQKKGYHIVIIGDPSHPEVIGINGWCDNTAHIVKNEDDVHRIPFLDNLCIVAQTTISTSLYTELTAMIEQKSNNVLKFNTICSATRDRQNSARNLAKEVDVMIIVGGYHSSNTQKLVEICKQEKPDTTFHIETAGEIPMNILKNYESVGVTAGASTPKWIIDEVIDRINNL</sequence>
<evidence type="ECO:0000255" key="1">
    <source>
        <dbReference type="HAMAP-Rule" id="MF_00191"/>
    </source>
</evidence>
<proteinExistence type="inferred from homology"/>
<accession>A8MFE2</accession>
<dbReference type="EC" id="1.17.7.4" evidence="1"/>
<dbReference type="EMBL" id="CP000853">
    <property type="protein sequence ID" value="ABW19105.1"/>
    <property type="molecule type" value="Genomic_DNA"/>
</dbReference>
<dbReference type="RefSeq" id="WP_012159417.1">
    <property type="nucleotide sequence ID" value="NC_009922.1"/>
</dbReference>
<dbReference type="SMR" id="A8MFE2"/>
<dbReference type="STRING" id="350688.Clos_1562"/>
<dbReference type="KEGG" id="aoe:Clos_1562"/>
<dbReference type="eggNOG" id="COG0761">
    <property type="taxonomic scope" value="Bacteria"/>
</dbReference>
<dbReference type="HOGENOM" id="CLU_027486_0_1_9"/>
<dbReference type="OrthoDB" id="9804077at2"/>
<dbReference type="UniPathway" id="UPA00056">
    <property type="reaction ID" value="UER00097"/>
</dbReference>
<dbReference type="UniPathway" id="UPA00059">
    <property type="reaction ID" value="UER00105"/>
</dbReference>
<dbReference type="Proteomes" id="UP000000269">
    <property type="component" value="Chromosome"/>
</dbReference>
<dbReference type="GO" id="GO:0051539">
    <property type="term" value="F:4 iron, 4 sulfur cluster binding"/>
    <property type="evidence" value="ECO:0007669"/>
    <property type="project" value="UniProtKB-UniRule"/>
</dbReference>
<dbReference type="GO" id="GO:0051745">
    <property type="term" value="F:4-hydroxy-3-methylbut-2-enyl diphosphate reductase activity"/>
    <property type="evidence" value="ECO:0007669"/>
    <property type="project" value="UniProtKB-UniRule"/>
</dbReference>
<dbReference type="GO" id="GO:0046872">
    <property type="term" value="F:metal ion binding"/>
    <property type="evidence" value="ECO:0007669"/>
    <property type="project" value="UniProtKB-KW"/>
</dbReference>
<dbReference type="GO" id="GO:0050992">
    <property type="term" value="P:dimethylallyl diphosphate biosynthetic process"/>
    <property type="evidence" value="ECO:0007669"/>
    <property type="project" value="UniProtKB-UniRule"/>
</dbReference>
<dbReference type="GO" id="GO:0019288">
    <property type="term" value="P:isopentenyl diphosphate biosynthetic process, methylerythritol 4-phosphate pathway"/>
    <property type="evidence" value="ECO:0007669"/>
    <property type="project" value="UniProtKB-UniRule"/>
</dbReference>
<dbReference type="GO" id="GO:0016114">
    <property type="term" value="P:terpenoid biosynthetic process"/>
    <property type="evidence" value="ECO:0007669"/>
    <property type="project" value="UniProtKB-UniRule"/>
</dbReference>
<dbReference type="CDD" id="cd13944">
    <property type="entry name" value="lytB_ispH"/>
    <property type="match status" value="1"/>
</dbReference>
<dbReference type="Gene3D" id="3.40.50.11270">
    <property type="match status" value="1"/>
</dbReference>
<dbReference type="Gene3D" id="3.40.1010.20">
    <property type="entry name" value="4-hydroxy-3-methylbut-2-enyl diphosphate reductase, catalytic domain"/>
    <property type="match status" value="2"/>
</dbReference>
<dbReference type="HAMAP" id="MF_00191">
    <property type="entry name" value="IspH"/>
    <property type="match status" value="1"/>
</dbReference>
<dbReference type="InterPro" id="IPR003451">
    <property type="entry name" value="LytB/IspH"/>
</dbReference>
<dbReference type="NCBIfam" id="TIGR00216">
    <property type="entry name" value="ispH_lytB"/>
    <property type="match status" value="1"/>
</dbReference>
<dbReference type="NCBIfam" id="NF002187">
    <property type="entry name" value="PRK01045.1-1"/>
    <property type="match status" value="1"/>
</dbReference>
<dbReference type="NCBIfam" id="NF009024">
    <property type="entry name" value="PRK12360.1"/>
    <property type="match status" value="1"/>
</dbReference>
<dbReference type="PANTHER" id="PTHR30426">
    <property type="entry name" value="4-HYDROXY-3-METHYLBUT-2-ENYL DIPHOSPHATE REDUCTASE"/>
    <property type="match status" value="1"/>
</dbReference>
<dbReference type="PANTHER" id="PTHR30426:SF0">
    <property type="entry name" value="4-HYDROXY-3-METHYLBUT-2-ENYL DIPHOSPHATE REDUCTASE"/>
    <property type="match status" value="1"/>
</dbReference>
<dbReference type="Pfam" id="PF02401">
    <property type="entry name" value="LYTB"/>
    <property type="match status" value="1"/>
</dbReference>
<protein>
    <recommendedName>
        <fullName evidence="1">4-hydroxy-3-methylbut-2-enyl diphosphate reductase</fullName>
        <shortName evidence="1">HMBPP reductase</shortName>
        <ecNumber evidence="1">1.17.7.4</ecNumber>
    </recommendedName>
</protein>